<accession>P63139</accession>
<accession>P22569</accession>
<accession>Q3UK54</accession>
<organism>
    <name type="scientific">Mus musculus</name>
    <name type="common">Mouse</name>
    <dbReference type="NCBI Taxonomy" id="10090"/>
    <lineage>
        <taxon>Eukaryota</taxon>
        <taxon>Metazoa</taxon>
        <taxon>Chordata</taxon>
        <taxon>Craniata</taxon>
        <taxon>Vertebrata</taxon>
        <taxon>Euteleostomi</taxon>
        <taxon>Mammalia</taxon>
        <taxon>Eutheria</taxon>
        <taxon>Euarchontoglires</taxon>
        <taxon>Glires</taxon>
        <taxon>Rodentia</taxon>
        <taxon>Myomorpha</taxon>
        <taxon>Muroidea</taxon>
        <taxon>Muridae</taxon>
        <taxon>Murinae</taxon>
        <taxon>Mus</taxon>
        <taxon>Mus</taxon>
    </lineage>
</organism>
<evidence type="ECO:0000250" key="1"/>
<evidence type="ECO:0000250" key="2">
    <source>
        <dbReference type="UniProtKB" id="P25208"/>
    </source>
</evidence>
<evidence type="ECO:0000256" key="3">
    <source>
        <dbReference type="SAM" id="MobiDB-lite"/>
    </source>
</evidence>
<evidence type="ECO:0000305" key="4"/>
<proteinExistence type="evidence at protein level"/>
<gene>
    <name type="primary">Nfyb</name>
</gene>
<keyword id="KW-0010">Activator</keyword>
<keyword id="KW-0025">Alternative splicing</keyword>
<keyword id="KW-0903">Direct protein sequencing</keyword>
<keyword id="KW-0238">DNA-binding</keyword>
<keyword id="KW-1017">Isopeptide bond</keyword>
<keyword id="KW-0539">Nucleus</keyword>
<keyword id="KW-1185">Reference proteome</keyword>
<keyword id="KW-0804">Transcription</keyword>
<keyword id="KW-0805">Transcription regulation</keyword>
<keyword id="KW-0832">Ubl conjugation</keyword>
<protein>
    <recommendedName>
        <fullName>Nuclear transcription factor Y subunit beta</fullName>
    </recommendedName>
    <alternativeName>
        <fullName>CAAT box DNA-binding protein subunit B</fullName>
    </alternativeName>
    <alternativeName>
        <fullName>Nuclear transcription factor Y subunit B</fullName>
        <shortName>NF-YB</shortName>
    </alternativeName>
</protein>
<feature type="chain" id="PRO_0000204610" description="Nuclear transcription factor Y subunit beta">
    <location>
        <begin position="1"/>
        <end position="207"/>
    </location>
</feature>
<feature type="DNA-binding region" evidence="1">
    <location>
        <begin position="59"/>
        <end position="65"/>
    </location>
</feature>
<feature type="region of interest" description="A domain">
    <location>
        <begin position="1"/>
        <end position="52"/>
    </location>
</feature>
<feature type="region of interest" description="Disordered" evidence="3">
    <location>
        <begin position="27"/>
        <end position="52"/>
    </location>
</feature>
<feature type="region of interest" description="B domain">
    <location>
        <begin position="53"/>
        <end position="142"/>
    </location>
</feature>
<feature type="region of interest" description="Subunit association domain (SAD)" evidence="1">
    <location>
        <begin position="86"/>
        <end position="97"/>
    </location>
</feature>
<feature type="region of interest" description="C domain">
    <location>
        <begin position="143"/>
        <end position="207"/>
    </location>
</feature>
<feature type="compositionally biased region" description="Basic and acidic residues" evidence="3">
    <location>
        <begin position="39"/>
        <end position="52"/>
    </location>
</feature>
<feature type="cross-link" description="Glycyl lysine isopeptide (Lys-Gly) (interchain with G-Cter in ubiquitin)" evidence="2">
    <location>
        <position position="140"/>
    </location>
</feature>
<comment type="function">
    <text>Component of the sequence-specific heterotrimeric transcription factor (NF-Y) which specifically recognizes a 5'-CCAAT-3' box motif found in the promoters of its target genes. NF-Y can function as both an activator and a repressor, depending on its interacting cofactors.</text>
</comment>
<comment type="subunit">
    <text evidence="1">Heterotrimeric transcription factor composed of three components, NF-YA, NF-YB and NF-YC. NF-YB and NF-YC must interact and dimerize for NF-YA association and DNA binding. Interacts with C1QBP (By similarity).</text>
</comment>
<comment type="subcellular location">
    <subcellularLocation>
        <location>Nucleus</location>
    </subcellularLocation>
</comment>
<comment type="alternative products">
    <event type="alternative splicing"/>
    <isoform>
        <id>P63139-1</id>
        <id>P22569-1</id>
        <name>1</name>
        <sequence type="displayed"/>
    </isoform>
    <text>3 isoforms may be produced.</text>
</comment>
<comment type="domain">
    <text>Can be divided into 3 domains: the weakly conserved A domain, the highly conserved B domain thought to be involved in subunit interaction and DNA binding, and the Glu-rich C domain.</text>
</comment>
<comment type="PTM">
    <text evidence="1">Monoubiquitination at Lys-140 plays an important role in transcriptional activation by allowing the deposition of histone H3 methylations as well as histone H2B monoubiquitination at 'Lys-121'.</text>
</comment>
<comment type="similarity">
    <text evidence="4">Belongs to the NFYB/HAP3 subunit family.</text>
</comment>
<reference key="1">
    <citation type="journal article" date="1990" name="EMBO J.">
        <title>Co-evolution from yeast to mouse: cDNA cloning of the two NF-Y (CP-1/CBF) subunits.</title>
        <authorList>
            <person name="Hooft van Huijsduijnen R."/>
            <person name="Li X.-Y."/>
            <person name="Black D."/>
            <person name="Matthes H."/>
            <person name="Benoist C."/>
            <person name="Mathis D."/>
        </authorList>
    </citation>
    <scope>NUCLEOTIDE SEQUENCE [MRNA]</scope>
    <scope>PROTEIN SEQUENCE OF 51-69; 137-140 AND 194-206</scope>
</reference>
<reference key="2">
    <citation type="journal article" date="1992" name="Nucleic Acids Res.">
        <title>Evolutionary variation of the CCAAT-binding transcription factor NF-Y.</title>
        <authorList>
            <person name="Li X.-Y."/>
            <person name="Mantovani R."/>
            <person name="Hooft van Huijsduijnen R."/>
            <person name="Andre I."/>
            <person name="Benoist C."/>
            <person name="Mathis D."/>
        </authorList>
    </citation>
    <scope>NUCLEOTIDE SEQUENCE [MRNA]</scope>
</reference>
<reference key="3">
    <citation type="journal article" date="1992" name="J. Biol. Chem.">
        <title>Intron-exon organization of the NF-Y genes. Tissue-specific splicing modifies an activation domain.</title>
        <authorList>
            <person name="Li X.-Y."/>
            <person name="Hooft van Huijsduijnen R."/>
            <person name="Mantovani R."/>
            <person name="Benoist C.O."/>
            <person name="Mathis D."/>
        </authorList>
    </citation>
    <scope>NUCLEOTIDE SEQUENCE [MRNA]</scope>
    <scope>ALTERNATIVE SPLICING</scope>
</reference>
<reference key="4">
    <citation type="journal article" date="2005" name="Science">
        <title>The transcriptional landscape of the mammalian genome.</title>
        <authorList>
            <person name="Carninci P."/>
            <person name="Kasukawa T."/>
            <person name="Katayama S."/>
            <person name="Gough J."/>
            <person name="Frith M.C."/>
            <person name="Maeda N."/>
            <person name="Oyama R."/>
            <person name="Ravasi T."/>
            <person name="Lenhard B."/>
            <person name="Wells C."/>
            <person name="Kodzius R."/>
            <person name="Shimokawa K."/>
            <person name="Bajic V.B."/>
            <person name="Brenner S.E."/>
            <person name="Batalov S."/>
            <person name="Forrest A.R."/>
            <person name="Zavolan M."/>
            <person name="Davis M.J."/>
            <person name="Wilming L.G."/>
            <person name="Aidinis V."/>
            <person name="Allen J.E."/>
            <person name="Ambesi-Impiombato A."/>
            <person name="Apweiler R."/>
            <person name="Aturaliya R.N."/>
            <person name="Bailey T.L."/>
            <person name="Bansal M."/>
            <person name="Baxter L."/>
            <person name="Beisel K.W."/>
            <person name="Bersano T."/>
            <person name="Bono H."/>
            <person name="Chalk A.M."/>
            <person name="Chiu K.P."/>
            <person name="Choudhary V."/>
            <person name="Christoffels A."/>
            <person name="Clutterbuck D.R."/>
            <person name="Crowe M.L."/>
            <person name="Dalla E."/>
            <person name="Dalrymple B.P."/>
            <person name="de Bono B."/>
            <person name="Della Gatta G."/>
            <person name="di Bernardo D."/>
            <person name="Down T."/>
            <person name="Engstrom P."/>
            <person name="Fagiolini M."/>
            <person name="Faulkner G."/>
            <person name="Fletcher C.F."/>
            <person name="Fukushima T."/>
            <person name="Furuno M."/>
            <person name="Futaki S."/>
            <person name="Gariboldi M."/>
            <person name="Georgii-Hemming P."/>
            <person name="Gingeras T.R."/>
            <person name="Gojobori T."/>
            <person name="Green R.E."/>
            <person name="Gustincich S."/>
            <person name="Harbers M."/>
            <person name="Hayashi Y."/>
            <person name="Hensch T.K."/>
            <person name="Hirokawa N."/>
            <person name="Hill D."/>
            <person name="Huminiecki L."/>
            <person name="Iacono M."/>
            <person name="Ikeo K."/>
            <person name="Iwama A."/>
            <person name="Ishikawa T."/>
            <person name="Jakt M."/>
            <person name="Kanapin A."/>
            <person name="Katoh M."/>
            <person name="Kawasawa Y."/>
            <person name="Kelso J."/>
            <person name="Kitamura H."/>
            <person name="Kitano H."/>
            <person name="Kollias G."/>
            <person name="Krishnan S.P."/>
            <person name="Kruger A."/>
            <person name="Kummerfeld S.K."/>
            <person name="Kurochkin I.V."/>
            <person name="Lareau L.F."/>
            <person name="Lazarevic D."/>
            <person name="Lipovich L."/>
            <person name="Liu J."/>
            <person name="Liuni S."/>
            <person name="McWilliam S."/>
            <person name="Madan Babu M."/>
            <person name="Madera M."/>
            <person name="Marchionni L."/>
            <person name="Matsuda H."/>
            <person name="Matsuzawa S."/>
            <person name="Miki H."/>
            <person name="Mignone F."/>
            <person name="Miyake S."/>
            <person name="Morris K."/>
            <person name="Mottagui-Tabar S."/>
            <person name="Mulder N."/>
            <person name="Nakano N."/>
            <person name="Nakauchi H."/>
            <person name="Ng P."/>
            <person name="Nilsson R."/>
            <person name="Nishiguchi S."/>
            <person name="Nishikawa S."/>
            <person name="Nori F."/>
            <person name="Ohara O."/>
            <person name="Okazaki Y."/>
            <person name="Orlando V."/>
            <person name="Pang K.C."/>
            <person name="Pavan W.J."/>
            <person name="Pavesi G."/>
            <person name="Pesole G."/>
            <person name="Petrovsky N."/>
            <person name="Piazza S."/>
            <person name="Reed J."/>
            <person name="Reid J.F."/>
            <person name="Ring B.Z."/>
            <person name="Ringwald M."/>
            <person name="Rost B."/>
            <person name="Ruan Y."/>
            <person name="Salzberg S.L."/>
            <person name="Sandelin A."/>
            <person name="Schneider C."/>
            <person name="Schoenbach C."/>
            <person name="Sekiguchi K."/>
            <person name="Semple C.A."/>
            <person name="Seno S."/>
            <person name="Sessa L."/>
            <person name="Sheng Y."/>
            <person name="Shibata Y."/>
            <person name="Shimada H."/>
            <person name="Shimada K."/>
            <person name="Silva D."/>
            <person name="Sinclair B."/>
            <person name="Sperling S."/>
            <person name="Stupka E."/>
            <person name="Sugiura K."/>
            <person name="Sultana R."/>
            <person name="Takenaka Y."/>
            <person name="Taki K."/>
            <person name="Tammoja K."/>
            <person name="Tan S.L."/>
            <person name="Tang S."/>
            <person name="Taylor M.S."/>
            <person name="Tegner J."/>
            <person name="Teichmann S.A."/>
            <person name="Ueda H.R."/>
            <person name="van Nimwegen E."/>
            <person name="Verardo R."/>
            <person name="Wei C.L."/>
            <person name="Yagi K."/>
            <person name="Yamanishi H."/>
            <person name="Zabarovsky E."/>
            <person name="Zhu S."/>
            <person name="Zimmer A."/>
            <person name="Hide W."/>
            <person name="Bult C."/>
            <person name="Grimmond S.M."/>
            <person name="Teasdale R.D."/>
            <person name="Liu E.T."/>
            <person name="Brusic V."/>
            <person name="Quackenbush J."/>
            <person name="Wahlestedt C."/>
            <person name="Mattick J.S."/>
            <person name="Hume D.A."/>
            <person name="Kai C."/>
            <person name="Sasaki D."/>
            <person name="Tomaru Y."/>
            <person name="Fukuda S."/>
            <person name="Kanamori-Katayama M."/>
            <person name="Suzuki M."/>
            <person name="Aoki J."/>
            <person name="Arakawa T."/>
            <person name="Iida J."/>
            <person name="Imamura K."/>
            <person name="Itoh M."/>
            <person name="Kato T."/>
            <person name="Kawaji H."/>
            <person name="Kawagashira N."/>
            <person name="Kawashima T."/>
            <person name="Kojima M."/>
            <person name="Kondo S."/>
            <person name="Konno H."/>
            <person name="Nakano K."/>
            <person name="Ninomiya N."/>
            <person name="Nishio T."/>
            <person name="Okada M."/>
            <person name="Plessy C."/>
            <person name="Shibata K."/>
            <person name="Shiraki T."/>
            <person name="Suzuki S."/>
            <person name="Tagami M."/>
            <person name="Waki K."/>
            <person name="Watahiki A."/>
            <person name="Okamura-Oho Y."/>
            <person name="Suzuki H."/>
            <person name="Kawai J."/>
            <person name="Hayashizaki Y."/>
        </authorList>
    </citation>
    <scope>NUCLEOTIDE SEQUENCE [LARGE SCALE MRNA]</scope>
    <source>
        <strain>BALB/cJ</strain>
        <strain>C57BL/6J</strain>
    </source>
</reference>
<reference key="5">
    <citation type="journal article" date="2004" name="Genome Res.">
        <title>The status, quality, and expansion of the NIH full-length cDNA project: the Mammalian Gene Collection (MGC).</title>
        <authorList>
            <consortium name="The MGC Project Team"/>
        </authorList>
    </citation>
    <scope>NUCLEOTIDE SEQUENCE [LARGE SCALE MRNA]</scope>
    <source>
        <strain>C57BL/6J</strain>
    </source>
</reference>
<dbReference type="EMBL" id="X55316">
    <property type="protein sequence ID" value="CAA39024.1"/>
    <property type="molecule type" value="mRNA"/>
</dbReference>
<dbReference type="EMBL" id="AK010762">
    <property type="protein sequence ID" value="BAB27166.1"/>
    <property type="molecule type" value="mRNA"/>
</dbReference>
<dbReference type="EMBL" id="AK146168">
    <property type="protein sequence ID" value="BAE26948.1"/>
    <property type="molecule type" value="mRNA"/>
</dbReference>
<dbReference type="EMBL" id="BC010719">
    <property type="protein sequence ID" value="AAH10719.1"/>
    <property type="molecule type" value="mRNA"/>
</dbReference>
<dbReference type="CCDS" id="CCDS48654.1"/>
<dbReference type="PIR" id="F38245">
    <property type="entry name" value="F38245"/>
</dbReference>
<dbReference type="RefSeq" id="NP_001415615.1">
    <molecule id="P63139-1"/>
    <property type="nucleotide sequence ID" value="NM_001428686.1"/>
</dbReference>
<dbReference type="RefSeq" id="NP_035044.1">
    <molecule id="P63139-1"/>
    <property type="nucleotide sequence ID" value="NM_010914.3"/>
</dbReference>
<dbReference type="RefSeq" id="XP_011241681.1">
    <property type="nucleotide sequence ID" value="XM_011243379.2"/>
</dbReference>
<dbReference type="SMR" id="P63139"/>
<dbReference type="BioGRID" id="201761">
    <property type="interactions" value="8"/>
</dbReference>
<dbReference type="ComplexPortal" id="CPX-89">
    <property type="entry name" value="CCAAT-binding factor complex"/>
</dbReference>
<dbReference type="FunCoup" id="P63139">
    <property type="interactions" value="2827"/>
</dbReference>
<dbReference type="STRING" id="10090.ENSMUSP00000122403"/>
<dbReference type="PhosphoSitePlus" id="P63139"/>
<dbReference type="PaxDb" id="10090-ENSMUSP00000122403"/>
<dbReference type="ProteomicsDB" id="252887"/>
<dbReference type="Pumba" id="P63139"/>
<dbReference type="Antibodypedia" id="3780">
    <property type="antibodies" value="273 antibodies from 33 providers"/>
</dbReference>
<dbReference type="DNASU" id="18045"/>
<dbReference type="Ensembl" id="ENSMUST00000130911.8">
    <molecule id="P63139-1"/>
    <property type="protein sequence ID" value="ENSMUSP00000122403.2"/>
    <property type="gene ID" value="ENSMUSG00000020248.19"/>
</dbReference>
<dbReference type="GeneID" id="18045"/>
<dbReference type="KEGG" id="mmu:18045"/>
<dbReference type="UCSC" id="uc007gjv.1">
    <property type="organism name" value="mouse"/>
</dbReference>
<dbReference type="AGR" id="MGI:97317"/>
<dbReference type="CTD" id="4801"/>
<dbReference type="MGI" id="MGI:97317">
    <property type="gene designation" value="Nfyb"/>
</dbReference>
<dbReference type="VEuPathDB" id="HostDB:ENSMUSG00000020248"/>
<dbReference type="eggNOG" id="KOG0869">
    <property type="taxonomic scope" value="Eukaryota"/>
</dbReference>
<dbReference type="GeneTree" id="ENSGT00940000154917"/>
<dbReference type="InParanoid" id="P63139"/>
<dbReference type="OMA" id="NATHGDS"/>
<dbReference type="OrthoDB" id="386949at2759"/>
<dbReference type="PhylomeDB" id="P63139"/>
<dbReference type="TreeFam" id="TF314521"/>
<dbReference type="BioGRID-ORCS" id="18045">
    <property type="hits" value="25 hits in 80 CRISPR screens"/>
</dbReference>
<dbReference type="ChiTaRS" id="Nfyb">
    <property type="organism name" value="mouse"/>
</dbReference>
<dbReference type="PRO" id="PR:P63139"/>
<dbReference type="Proteomes" id="UP000000589">
    <property type="component" value="Chromosome 10"/>
</dbReference>
<dbReference type="RNAct" id="P63139">
    <property type="molecule type" value="protein"/>
</dbReference>
<dbReference type="Bgee" id="ENSMUSG00000020248">
    <property type="expression patterns" value="Expressed in cortical plate and 268 other cell types or tissues"/>
</dbReference>
<dbReference type="ExpressionAtlas" id="P63139">
    <property type="expression patterns" value="baseline and differential"/>
</dbReference>
<dbReference type="GO" id="GO:0016602">
    <property type="term" value="C:CCAAT-binding factor complex"/>
    <property type="evidence" value="ECO:0000266"/>
    <property type="project" value="ComplexPortal"/>
</dbReference>
<dbReference type="GO" id="GO:0005654">
    <property type="term" value="C:nucleoplasm"/>
    <property type="evidence" value="ECO:0000304"/>
    <property type="project" value="Reactome"/>
</dbReference>
<dbReference type="GO" id="GO:0005634">
    <property type="term" value="C:nucleus"/>
    <property type="evidence" value="ECO:0000314"/>
    <property type="project" value="MGI"/>
</dbReference>
<dbReference type="GO" id="GO:0032993">
    <property type="term" value="C:protein-DNA complex"/>
    <property type="evidence" value="ECO:0007669"/>
    <property type="project" value="Ensembl"/>
</dbReference>
<dbReference type="GO" id="GO:0005667">
    <property type="term" value="C:transcription regulator complex"/>
    <property type="evidence" value="ECO:0000305"/>
    <property type="project" value="MGI"/>
</dbReference>
<dbReference type="GO" id="GO:0003677">
    <property type="term" value="F:DNA binding"/>
    <property type="evidence" value="ECO:0000314"/>
    <property type="project" value="MGI"/>
</dbReference>
<dbReference type="GO" id="GO:0001228">
    <property type="term" value="F:DNA-binding transcription activator activity, RNA polymerase II-specific"/>
    <property type="evidence" value="ECO:0007669"/>
    <property type="project" value="Ensembl"/>
</dbReference>
<dbReference type="GO" id="GO:0003700">
    <property type="term" value="F:DNA-binding transcription factor activity"/>
    <property type="evidence" value="ECO:0000314"/>
    <property type="project" value="MGI"/>
</dbReference>
<dbReference type="GO" id="GO:0140297">
    <property type="term" value="F:DNA-binding transcription factor binding"/>
    <property type="evidence" value="ECO:0007669"/>
    <property type="project" value="Ensembl"/>
</dbReference>
<dbReference type="GO" id="GO:0046982">
    <property type="term" value="F:protein heterodimerization activity"/>
    <property type="evidence" value="ECO:0007669"/>
    <property type="project" value="InterPro"/>
</dbReference>
<dbReference type="GO" id="GO:0000978">
    <property type="term" value="F:RNA polymerase II cis-regulatory region sequence-specific DNA binding"/>
    <property type="evidence" value="ECO:0007669"/>
    <property type="project" value="Ensembl"/>
</dbReference>
<dbReference type="GO" id="GO:0043565">
    <property type="term" value="F:sequence-specific DNA binding"/>
    <property type="evidence" value="ECO:0000316"/>
    <property type="project" value="MGI"/>
</dbReference>
<dbReference type="GO" id="GO:1990830">
    <property type="term" value="P:cellular response to leukemia inhibitory factor"/>
    <property type="evidence" value="ECO:0000270"/>
    <property type="project" value="MGI"/>
</dbReference>
<dbReference type="GO" id="GO:0045893">
    <property type="term" value="P:positive regulation of DNA-templated transcription"/>
    <property type="evidence" value="ECO:0000314"/>
    <property type="project" value="MGI"/>
</dbReference>
<dbReference type="GO" id="GO:0045944">
    <property type="term" value="P:positive regulation of transcription by RNA polymerase II"/>
    <property type="evidence" value="ECO:0000266"/>
    <property type="project" value="ComplexPortal"/>
</dbReference>
<dbReference type="CDD" id="cd22907">
    <property type="entry name" value="HFD_NFYB"/>
    <property type="match status" value="1"/>
</dbReference>
<dbReference type="FunFam" id="1.10.20.10:FF:000027">
    <property type="entry name" value="Nuclear transcription factor Y subunit beta"/>
    <property type="match status" value="1"/>
</dbReference>
<dbReference type="Gene3D" id="1.10.20.10">
    <property type="entry name" value="Histone, subunit A"/>
    <property type="match status" value="1"/>
</dbReference>
<dbReference type="InterPro" id="IPR003958">
    <property type="entry name" value="CBFA_NFYB_domain"/>
</dbReference>
<dbReference type="InterPro" id="IPR009072">
    <property type="entry name" value="Histone-fold"/>
</dbReference>
<dbReference type="InterPro" id="IPR027113">
    <property type="entry name" value="Transc_fact_NFYB/HAP3"/>
</dbReference>
<dbReference type="InterPro" id="IPR003956">
    <property type="entry name" value="Transcrpt_fac_NFYB/HAP3_CS"/>
</dbReference>
<dbReference type="PANTHER" id="PTHR11064">
    <property type="entry name" value="CCAAT-BINDING TRANSCRIPTION FACTOR-RELATED"/>
    <property type="match status" value="1"/>
</dbReference>
<dbReference type="PANTHER" id="PTHR11064:SF195">
    <property type="entry name" value="NUCLEAR TRANSCRIPTION FACTOR Y SUBUNIT BETA"/>
    <property type="match status" value="1"/>
</dbReference>
<dbReference type="Pfam" id="PF00808">
    <property type="entry name" value="CBFD_NFYB_HMF"/>
    <property type="match status" value="1"/>
</dbReference>
<dbReference type="PRINTS" id="PR00615">
    <property type="entry name" value="CCAATSUBUNTA"/>
</dbReference>
<dbReference type="SUPFAM" id="SSF47113">
    <property type="entry name" value="Histone-fold"/>
    <property type="match status" value="1"/>
</dbReference>
<dbReference type="PROSITE" id="PS00685">
    <property type="entry name" value="NFYB_HAP3"/>
    <property type="match status" value="1"/>
</dbReference>
<sequence length="207" mass="22787">MTMDGDSSTTDASQLGISADYIGGSHYVIQPHDDTEDSMNDHEDTNGSKESFREQDIYLPIANVARIMKNAIPQTGKIAKDAKECVQECVSEFISFITSEASERCHQEKRKTINGEDILFAMSTLGFDSYVEPLKLYLQKFREAMKGEKGIGGAVSATDGLSEELTEEAFTNQLPAGLITADGQQQNVMVYTTSYQQISGVQQIQFS</sequence>
<name>NFYB_MOUSE</name>